<sequence>MKKRLCAVLLASPLLFSAAVFADDAQQLRDKLIGTASLKADFKQTVTDVNKKVIQTGSGIFALAYPNQFYWHLTQPDESQIVADGKDLWIYNPFAEEVVIMDFAEAINASPIALLVHRDDATWSQYSVTKQQDCYEIKPKAIDSGILSVKVCFKNAQLANFNVADDKGNLSQFDLSNQQAITDKDKALFSFVLPDNVDVDDQRRKTAH</sequence>
<accession>B8EET4</accession>
<gene>
    <name evidence="1" type="primary">lolA</name>
    <name type="ordered locus">Sbal223_2192</name>
</gene>
<proteinExistence type="inferred from homology"/>
<evidence type="ECO:0000255" key="1">
    <source>
        <dbReference type="HAMAP-Rule" id="MF_00240"/>
    </source>
</evidence>
<protein>
    <recommendedName>
        <fullName evidence="1">Outer-membrane lipoprotein carrier protein</fullName>
    </recommendedName>
</protein>
<dbReference type="EMBL" id="CP001252">
    <property type="protein sequence ID" value="ACK46692.1"/>
    <property type="molecule type" value="Genomic_DNA"/>
</dbReference>
<dbReference type="RefSeq" id="WP_011846837.1">
    <property type="nucleotide sequence ID" value="NC_011663.1"/>
</dbReference>
<dbReference type="SMR" id="B8EET4"/>
<dbReference type="KEGG" id="sbp:Sbal223_2192"/>
<dbReference type="HOGENOM" id="CLU_087560_1_1_6"/>
<dbReference type="Proteomes" id="UP000002507">
    <property type="component" value="Chromosome"/>
</dbReference>
<dbReference type="GO" id="GO:0030288">
    <property type="term" value="C:outer membrane-bounded periplasmic space"/>
    <property type="evidence" value="ECO:0007669"/>
    <property type="project" value="TreeGrafter"/>
</dbReference>
<dbReference type="GO" id="GO:0044874">
    <property type="term" value="P:lipoprotein localization to outer membrane"/>
    <property type="evidence" value="ECO:0007669"/>
    <property type="project" value="UniProtKB-UniRule"/>
</dbReference>
<dbReference type="GO" id="GO:0042953">
    <property type="term" value="P:lipoprotein transport"/>
    <property type="evidence" value="ECO:0007669"/>
    <property type="project" value="InterPro"/>
</dbReference>
<dbReference type="CDD" id="cd16325">
    <property type="entry name" value="LolA"/>
    <property type="match status" value="1"/>
</dbReference>
<dbReference type="Gene3D" id="2.50.20.10">
    <property type="entry name" value="Lipoprotein localisation LolA/LolB/LppX"/>
    <property type="match status" value="1"/>
</dbReference>
<dbReference type="HAMAP" id="MF_00240">
    <property type="entry name" value="LolA"/>
    <property type="match status" value="1"/>
</dbReference>
<dbReference type="InterPro" id="IPR029046">
    <property type="entry name" value="LolA/LolB/LppX"/>
</dbReference>
<dbReference type="InterPro" id="IPR004564">
    <property type="entry name" value="OM_lipoprot_carrier_LolA-like"/>
</dbReference>
<dbReference type="InterPro" id="IPR018323">
    <property type="entry name" value="OM_lipoprot_carrier_LolA_Pbac"/>
</dbReference>
<dbReference type="NCBIfam" id="TIGR00547">
    <property type="entry name" value="lolA"/>
    <property type="match status" value="1"/>
</dbReference>
<dbReference type="PANTHER" id="PTHR35869">
    <property type="entry name" value="OUTER-MEMBRANE LIPOPROTEIN CARRIER PROTEIN"/>
    <property type="match status" value="1"/>
</dbReference>
<dbReference type="PANTHER" id="PTHR35869:SF1">
    <property type="entry name" value="OUTER-MEMBRANE LIPOPROTEIN CARRIER PROTEIN"/>
    <property type="match status" value="1"/>
</dbReference>
<dbReference type="Pfam" id="PF03548">
    <property type="entry name" value="LolA"/>
    <property type="match status" value="1"/>
</dbReference>
<dbReference type="SUPFAM" id="SSF89392">
    <property type="entry name" value="Prokaryotic lipoproteins and lipoprotein localization factors"/>
    <property type="match status" value="1"/>
</dbReference>
<feature type="signal peptide" evidence="1">
    <location>
        <begin position="1"/>
        <end position="22"/>
    </location>
</feature>
<feature type="chain" id="PRO_5000424395" description="Outer-membrane lipoprotein carrier protein">
    <location>
        <begin position="23"/>
        <end position="208"/>
    </location>
</feature>
<organism>
    <name type="scientific">Shewanella baltica (strain OS223)</name>
    <dbReference type="NCBI Taxonomy" id="407976"/>
    <lineage>
        <taxon>Bacteria</taxon>
        <taxon>Pseudomonadati</taxon>
        <taxon>Pseudomonadota</taxon>
        <taxon>Gammaproteobacteria</taxon>
        <taxon>Alteromonadales</taxon>
        <taxon>Shewanellaceae</taxon>
        <taxon>Shewanella</taxon>
    </lineage>
</organism>
<keyword id="KW-0143">Chaperone</keyword>
<keyword id="KW-0574">Periplasm</keyword>
<keyword id="KW-0653">Protein transport</keyword>
<keyword id="KW-0732">Signal</keyword>
<keyword id="KW-0813">Transport</keyword>
<name>LOLA_SHEB2</name>
<reference key="1">
    <citation type="submission" date="2008-12" db="EMBL/GenBank/DDBJ databases">
        <title>Complete sequence of chromosome of Shewanella baltica OS223.</title>
        <authorList>
            <consortium name="US DOE Joint Genome Institute"/>
            <person name="Lucas S."/>
            <person name="Copeland A."/>
            <person name="Lapidus A."/>
            <person name="Glavina del Rio T."/>
            <person name="Dalin E."/>
            <person name="Tice H."/>
            <person name="Bruce D."/>
            <person name="Goodwin L."/>
            <person name="Pitluck S."/>
            <person name="Chertkov O."/>
            <person name="Meincke L."/>
            <person name="Brettin T."/>
            <person name="Detter J.C."/>
            <person name="Han C."/>
            <person name="Kuske C.R."/>
            <person name="Larimer F."/>
            <person name="Land M."/>
            <person name="Hauser L."/>
            <person name="Kyrpides N."/>
            <person name="Ovchinnikova G."/>
            <person name="Brettar I."/>
            <person name="Rodrigues J."/>
            <person name="Konstantinidis K."/>
            <person name="Tiedje J."/>
        </authorList>
    </citation>
    <scope>NUCLEOTIDE SEQUENCE [LARGE SCALE GENOMIC DNA]</scope>
    <source>
        <strain>OS223</strain>
    </source>
</reference>
<comment type="function">
    <text evidence="1">Participates in the translocation of lipoproteins from the inner membrane to the outer membrane. Only forms a complex with a lipoprotein if the residue after the N-terminal Cys is not an aspartate (The Asp acts as a targeting signal to indicate that the lipoprotein should stay in the inner membrane).</text>
</comment>
<comment type="subunit">
    <text evidence="1">Monomer.</text>
</comment>
<comment type="subcellular location">
    <subcellularLocation>
        <location evidence="1">Periplasm</location>
    </subcellularLocation>
</comment>
<comment type="similarity">
    <text evidence="1">Belongs to the LolA family.</text>
</comment>